<feature type="chain" id="PRO_0000162384" description="Phenazine biosynthesis-like domain-containing protein 2">
    <location>
        <begin position="1"/>
        <end position="288"/>
    </location>
</feature>
<feature type="active site" evidence="1">
    <location>
        <position position="46"/>
    </location>
</feature>
<feature type="sequence conflict" description="In Ref. 1; BAB31348." evidence="2" ref="1">
    <original>A</original>
    <variation>L</variation>
    <location>
        <position position="15"/>
    </location>
</feature>
<comment type="similarity">
    <text evidence="2">Belongs to the PhzF family.</text>
</comment>
<organism>
    <name type="scientific">Mus musculus</name>
    <name type="common">Mouse</name>
    <dbReference type="NCBI Taxonomy" id="10090"/>
    <lineage>
        <taxon>Eukaryota</taxon>
        <taxon>Metazoa</taxon>
        <taxon>Chordata</taxon>
        <taxon>Craniata</taxon>
        <taxon>Vertebrata</taxon>
        <taxon>Euteleostomi</taxon>
        <taxon>Mammalia</taxon>
        <taxon>Eutheria</taxon>
        <taxon>Euarchontoglires</taxon>
        <taxon>Glires</taxon>
        <taxon>Rodentia</taxon>
        <taxon>Myomorpha</taxon>
        <taxon>Muroidea</taxon>
        <taxon>Muridae</taxon>
        <taxon>Murinae</taxon>
        <taxon>Mus</taxon>
        <taxon>Mus</taxon>
    </lineage>
</organism>
<gene>
    <name type="primary">Pbld2</name>
    <name type="synonym">Mawbp1</name>
</gene>
<proteinExistence type="evidence at protein level"/>
<evidence type="ECO:0000250" key="1"/>
<evidence type="ECO:0000305" key="2"/>
<dbReference type="EC" id="5.1.-.-"/>
<dbReference type="EMBL" id="AK014198">
    <property type="protein sequence ID" value="BAB29200.1"/>
    <property type="molecule type" value="mRNA"/>
</dbReference>
<dbReference type="EMBL" id="AK018692">
    <property type="protein sequence ID" value="BAB31348.1"/>
    <property type="molecule type" value="mRNA"/>
</dbReference>
<dbReference type="EMBL" id="BC061073">
    <property type="protein sequence ID" value="AAH61073.1"/>
    <property type="molecule type" value="mRNA"/>
</dbReference>
<dbReference type="CCDS" id="CCDS23894.1"/>
<dbReference type="RefSeq" id="NP_001392673.1">
    <property type="nucleotide sequence ID" value="NM_001405744.1"/>
</dbReference>
<dbReference type="RefSeq" id="NP_001392674.1">
    <property type="nucleotide sequence ID" value="NM_001405745.1"/>
</dbReference>
<dbReference type="RefSeq" id="NP_001392675.1">
    <property type="nucleotide sequence ID" value="NM_001405746.1"/>
</dbReference>
<dbReference type="RefSeq" id="NP_080361.1">
    <property type="nucleotide sequence ID" value="NM_026085.3"/>
</dbReference>
<dbReference type="SMR" id="Q9CXN7"/>
<dbReference type="BioGRID" id="212092">
    <property type="interactions" value="1"/>
</dbReference>
<dbReference type="FunCoup" id="Q9CXN7">
    <property type="interactions" value="400"/>
</dbReference>
<dbReference type="STRING" id="10090.ENSMUSP00000020262"/>
<dbReference type="iPTMnet" id="Q9CXN7"/>
<dbReference type="PhosphoSitePlus" id="Q9CXN7"/>
<dbReference type="SwissPalm" id="Q9CXN7"/>
<dbReference type="jPOST" id="Q9CXN7"/>
<dbReference type="PaxDb" id="10090-ENSMUSP00000020262"/>
<dbReference type="PeptideAtlas" id="Q9CXN7"/>
<dbReference type="ProteomicsDB" id="294336"/>
<dbReference type="DNASU" id="67307"/>
<dbReference type="Ensembl" id="ENSMUST00000020262.5">
    <property type="protein sequence ID" value="ENSMUSP00000020262.5"/>
    <property type="gene ID" value="ENSMUSG00000020072.16"/>
</dbReference>
<dbReference type="GeneID" id="67307"/>
<dbReference type="KEGG" id="mmu:67307"/>
<dbReference type="UCSC" id="uc007fjr.1">
    <property type="organism name" value="mouse"/>
</dbReference>
<dbReference type="AGR" id="MGI:1914557"/>
<dbReference type="CTD" id="67307"/>
<dbReference type="MGI" id="MGI:1914557">
    <property type="gene designation" value="Pbld2"/>
</dbReference>
<dbReference type="VEuPathDB" id="HostDB:ENSMUSG00000020072"/>
<dbReference type="eggNOG" id="KOG3033">
    <property type="taxonomic scope" value="Eukaryota"/>
</dbReference>
<dbReference type="GeneTree" id="ENSGT00390000017595"/>
<dbReference type="HOGENOM" id="CLU_048756_2_0_1"/>
<dbReference type="InParanoid" id="Q9CXN7"/>
<dbReference type="OMA" id="DFPAQYP"/>
<dbReference type="OrthoDB" id="75169at2759"/>
<dbReference type="PhylomeDB" id="Q9CXN7"/>
<dbReference type="TreeFam" id="TF314596"/>
<dbReference type="BioGRID-ORCS" id="67307">
    <property type="hits" value="1 hit in 61 CRISPR screens"/>
</dbReference>
<dbReference type="ChiTaRS" id="Pbld2">
    <property type="organism name" value="mouse"/>
</dbReference>
<dbReference type="PRO" id="PR:Q9CXN7"/>
<dbReference type="Proteomes" id="UP000000589">
    <property type="component" value="Chromosome 10"/>
</dbReference>
<dbReference type="RNAct" id="Q9CXN7">
    <property type="molecule type" value="protein"/>
</dbReference>
<dbReference type="Bgee" id="ENSMUSG00000020072">
    <property type="expression patterns" value="Expressed in left lobe of liver and 157 other cell types or tissues"/>
</dbReference>
<dbReference type="ExpressionAtlas" id="Q9CXN7">
    <property type="expression patterns" value="baseline and differential"/>
</dbReference>
<dbReference type="GO" id="GO:0016853">
    <property type="term" value="F:isomerase activity"/>
    <property type="evidence" value="ECO:0007669"/>
    <property type="project" value="UniProtKB-KW"/>
</dbReference>
<dbReference type="GO" id="GO:0009058">
    <property type="term" value="P:biosynthetic process"/>
    <property type="evidence" value="ECO:0007669"/>
    <property type="project" value="InterPro"/>
</dbReference>
<dbReference type="FunFam" id="3.10.310.10:FF:000013">
    <property type="entry name" value="Phenazine biosynthesis-like domain-containing protein 1"/>
    <property type="match status" value="1"/>
</dbReference>
<dbReference type="FunFam" id="3.10.310.10:FF:000020">
    <property type="entry name" value="Phenazine biosynthesis-like domain-containing protein 1"/>
    <property type="match status" value="1"/>
</dbReference>
<dbReference type="Gene3D" id="3.10.310.10">
    <property type="entry name" value="Diaminopimelate Epimerase, Chain A, domain 1"/>
    <property type="match status" value="2"/>
</dbReference>
<dbReference type="InterPro" id="IPR003719">
    <property type="entry name" value="Phenazine_PhzF-like"/>
</dbReference>
<dbReference type="NCBIfam" id="TIGR00654">
    <property type="entry name" value="PhzF_family"/>
    <property type="match status" value="1"/>
</dbReference>
<dbReference type="PANTHER" id="PTHR13774">
    <property type="entry name" value="PHENAZINE BIOSYNTHESIS PROTEIN"/>
    <property type="match status" value="1"/>
</dbReference>
<dbReference type="PANTHER" id="PTHR13774:SF17">
    <property type="entry name" value="PHENAZINE BIOSYNTHESIS-LIKE DOMAIN-CONTAINING PROTEIN"/>
    <property type="match status" value="1"/>
</dbReference>
<dbReference type="Pfam" id="PF02567">
    <property type="entry name" value="PhzC-PhzF"/>
    <property type="match status" value="1"/>
</dbReference>
<dbReference type="PIRSF" id="PIRSF016184">
    <property type="entry name" value="PhzC_PhzF"/>
    <property type="match status" value="1"/>
</dbReference>
<dbReference type="SUPFAM" id="SSF54506">
    <property type="entry name" value="Diaminopimelate epimerase-like"/>
    <property type="match status" value="1"/>
</dbReference>
<reference key="1">
    <citation type="journal article" date="2005" name="Science">
        <title>The transcriptional landscape of the mammalian genome.</title>
        <authorList>
            <person name="Carninci P."/>
            <person name="Kasukawa T."/>
            <person name="Katayama S."/>
            <person name="Gough J."/>
            <person name="Frith M.C."/>
            <person name="Maeda N."/>
            <person name="Oyama R."/>
            <person name="Ravasi T."/>
            <person name="Lenhard B."/>
            <person name="Wells C."/>
            <person name="Kodzius R."/>
            <person name="Shimokawa K."/>
            <person name="Bajic V.B."/>
            <person name="Brenner S.E."/>
            <person name="Batalov S."/>
            <person name="Forrest A.R."/>
            <person name="Zavolan M."/>
            <person name="Davis M.J."/>
            <person name="Wilming L.G."/>
            <person name="Aidinis V."/>
            <person name="Allen J.E."/>
            <person name="Ambesi-Impiombato A."/>
            <person name="Apweiler R."/>
            <person name="Aturaliya R.N."/>
            <person name="Bailey T.L."/>
            <person name="Bansal M."/>
            <person name="Baxter L."/>
            <person name="Beisel K.W."/>
            <person name="Bersano T."/>
            <person name="Bono H."/>
            <person name="Chalk A.M."/>
            <person name="Chiu K.P."/>
            <person name="Choudhary V."/>
            <person name="Christoffels A."/>
            <person name="Clutterbuck D.R."/>
            <person name="Crowe M.L."/>
            <person name="Dalla E."/>
            <person name="Dalrymple B.P."/>
            <person name="de Bono B."/>
            <person name="Della Gatta G."/>
            <person name="di Bernardo D."/>
            <person name="Down T."/>
            <person name="Engstrom P."/>
            <person name="Fagiolini M."/>
            <person name="Faulkner G."/>
            <person name="Fletcher C.F."/>
            <person name="Fukushima T."/>
            <person name="Furuno M."/>
            <person name="Futaki S."/>
            <person name="Gariboldi M."/>
            <person name="Georgii-Hemming P."/>
            <person name="Gingeras T.R."/>
            <person name="Gojobori T."/>
            <person name="Green R.E."/>
            <person name="Gustincich S."/>
            <person name="Harbers M."/>
            <person name="Hayashi Y."/>
            <person name="Hensch T.K."/>
            <person name="Hirokawa N."/>
            <person name="Hill D."/>
            <person name="Huminiecki L."/>
            <person name="Iacono M."/>
            <person name="Ikeo K."/>
            <person name="Iwama A."/>
            <person name="Ishikawa T."/>
            <person name="Jakt M."/>
            <person name="Kanapin A."/>
            <person name="Katoh M."/>
            <person name="Kawasawa Y."/>
            <person name="Kelso J."/>
            <person name="Kitamura H."/>
            <person name="Kitano H."/>
            <person name="Kollias G."/>
            <person name="Krishnan S.P."/>
            <person name="Kruger A."/>
            <person name="Kummerfeld S.K."/>
            <person name="Kurochkin I.V."/>
            <person name="Lareau L.F."/>
            <person name="Lazarevic D."/>
            <person name="Lipovich L."/>
            <person name="Liu J."/>
            <person name="Liuni S."/>
            <person name="McWilliam S."/>
            <person name="Madan Babu M."/>
            <person name="Madera M."/>
            <person name="Marchionni L."/>
            <person name="Matsuda H."/>
            <person name="Matsuzawa S."/>
            <person name="Miki H."/>
            <person name="Mignone F."/>
            <person name="Miyake S."/>
            <person name="Morris K."/>
            <person name="Mottagui-Tabar S."/>
            <person name="Mulder N."/>
            <person name="Nakano N."/>
            <person name="Nakauchi H."/>
            <person name="Ng P."/>
            <person name="Nilsson R."/>
            <person name="Nishiguchi S."/>
            <person name="Nishikawa S."/>
            <person name="Nori F."/>
            <person name="Ohara O."/>
            <person name="Okazaki Y."/>
            <person name="Orlando V."/>
            <person name="Pang K.C."/>
            <person name="Pavan W.J."/>
            <person name="Pavesi G."/>
            <person name="Pesole G."/>
            <person name="Petrovsky N."/>
            <person name="Piazza S."/>
            <person name="Reed J."/>
            <person name="Reid J.F."/>
            <person name="Ring B.Z."/>
            <person name="Ringwald M."/>
            <person name="Rost B."/>
            <person name="Ruan Y."/>
            <person name="Salzberg S.L."/>
            <person name="Sandelin A."/>
            <person name="Schneider C."/>
            <person name="Schoenbach C."/>
            <person name="Sekiguchi K."/>
            <person name="Semple C.A."/>
            <person name="Seno S."/>
            <person name="Sessa L."/>
            <person name="Sheng Y."/>
            <person name="Shibata Y."/>
            <person name="Shimada H."/>
            <person name="Shimada K."/>
            <person name="Silva D."/>
            <person name="Sinclair B."/>
            <person name="Sperling S."/>
            <person name="Stupka E."/>
            <person name="Sugiura K."/>
            <person name="Sultana R."/>
            <person name="Takenaka Y."/>
            <person name="Taki K."/>
            <person name="Tammoja K."/>
            <person name="Tan S.L."/>
            <person name="Tang S."/>
            <person name="Taylor M.S."/>
            <person name="Tegner J."/>
            <person name="Teichmann S.A."/>
            <person name="Ueda H.R."/>
            <person name="van Nimwegen E."/>
            <person name="Verardo R."/>
            <person name="Wei C.L."/>
            <person name="Yagi K."/>
            <person name="Yamanishi H."/>
            <person name="Zabarovsky E."/>
            <person name="Zhu S."/>
            <person name="Zimmer A."/>
            <person name="Hide W."/>
            <person name="Bult C."/>
            <person name="Grimmond S.M."/>
            <person name="Teasdale R.D."/>
            <person name="Liu E.T."/>
            <person name="Brusic V."/>
            <person name="Quackenbush J."/>
            <person name="Wahlestedt C."/>
            <person name="Mattick J.S."/>
            <person name="Hume D.A."/>
            <person name="Kai C."/>
            <person name="Sasaki D."/>
            <person name="Tomaru Y."/>
            <person name="Fukuda S."/>
            <person name="Kanamori-Katayama M."/>
            <person name="Suzuki M."/>
            <person name="Aoki J."/>
            <person name="Arakawa T."/>
            <person name="Iida J."/>
            <person name="Imamura K."/>
            <person name="Itoh M."/>
            <person name="Kato T."/>
            <person name="Kawaji H."/>
            <person name="Kawagashira N."/>
            <person name="Kawashima T."/>
            <person name="Kojima M."/>
            <person name="Kondo S."/>
            <person name="Konno H."/>
            <person name="Nakano K."/>
            <person name="Ninomiya N."/>
            <person name="Nishio T."/>
            <person name="Okada M."/>
            <person name="Plessy C."/>
            <person name="Shibata K."/>
            <person name="Shiraki T."/>
            <person name="Suzuki S."/>
            <person name="Tagami M."/>
            <person name="Waki K."/>
            <person name="Watahiki A."/>
            <person name="Okamura-Oho Y."/>
            <person name="Suzuki H."/>
            <person name="Kawai J."/>
            <person name="Hayashizaki Y."/>
        </authorList>
    </citation>
    <scope>NUCLEOTIDE SEQUENCE [LARGE SCALE MRNA]</scope>
    <source>
        <strain>C57BL/6J</strain>
        <tissue>Cecum</tissue>
        <tissue>Embryonic head</tissue>
    </source>
</reference>
<reference key="2">
    <citation type="journal article" date="2004" name="Genome Res.">
        <title>The status, quality, and expansion of the NIH full-length cDNA project: the Mammalian Gene Collection (MGC).</title>
        <authorList>
            <consortium name="The MGC Project Team"/>
        </authorList>
    </citation>
    <scope>NUCLEOTIDE SEQUENCE [LARGE SCALE MRNA]</scope>
    <source>
        <tissue>Liver</tissue>
    </source>
</reference>
<reference key="3">
    <citation type="journal article" date="2010" name="Cell">
        <title>A tissue-specific atlas of mouse protein phosphorylation and expression.</title>
        <authorList>
            <person name="Huttlin E.L."/>
            <person name="Jedrychowski M.P."/>
            <person name="Elias J.E."/>
            <person name="Goswami T."/>
            <person name="Rad R."/>
            <person name="Beausoleil S.A."/>
            <person name="Villen J."/>
            <person name="Haas W."/>
            <person name="Sowa M.E."/>
            <person name="Gygi S.P."/>
        </authorList>
    </citation>
    <scope>IDENTIFICATION BY MASS SPECTROMETRY [LARGE SCALE ANALYSIS]</scope>
    <source>
        <tissue>Kidney</tissue>
        <tissue>Liver</tissue>
        <tissue>Pancreas</tissue>
    </source>
</reference>
<name>PBLD2_MOUSE</name>
<accession>Q9CXN7</accession>
<accession>Q9D2W4</accession>
<protein>
    <recommendedName>
        <fullName>Phenazine biosynthesis-like domain-containing protein 2</fullName>
        <ecNumber>5.1.-.-</ecNumber>
    </recommendedName>
</protein>
<keyword id="KW-0413">Isomerase</keyword>
<keyword id="KW-1185">Reference proteome</keyword>
<sequence>MKLPIFIADAFTATAFRGNPAAVCLLERTLDEDAHQDIAREMNLSETAFVRKLQPTDDFTQSSRFGLRWFTPEAEFPLCGHATLASAAVLFQKRKNTNSTLTFVTMSGELKARREEDGIVLDFPVYPTFPQDFHEVEDLIKAAIGDTLVQDIRYSPDTKNLLVRLSDSYDRSFLESLKVNTEPLPAIEKTGKVRGLILTVKGEPGGQTALYDFYSRCFAPWVGVAEDPVTGSTHTLLGPYWSEELGKKEMRAFQCSRRGGELDINLRPDGRVDIKGGAVIVLEGTLTA</sequence>